<evidence type="ECO:0000250" key="1"/>
<evidence type="ECO:0000250" key="2">
    <source>
        <dbReference type="UniProtKB" id="P05362"/>
    </source>
</evidence>
<evidence type="ECO:0000255" key="3"/>
<evidence type="ECO:0000305" key="4"/>
<sequence>MAPSSPRPALPALLVLLGALFPGPGNAQTSVSPPKVILPRGGSVLVTCSTSCDQPTLLGIETPLPKKELLLLGNNQKVYELSNVQEDSQPMCYSNCPDGQSTAKTFLTVYWTPERVELAPLPSWQPVGKDLTLRCQVEGGAPRANLIVVLLRGEEELKREPAVGEPAEVTTTVPVEKDHHGANFLCRTELDLRPQGLKLFENTSAPYQLQTFVLPATPPQLVSPRVLEVDTQGTVVCSLDGLFPVSEAQVHLALGDQRLNPTVTYGNDSFSAKASVSVTAEDEGTQWLTCAVILGTQSQETLQTVTIYSFPAPNVILTKPEVSEGTEVTVKCEAHPRAKVTLNGVPAQPPGPRTQFLLKATPEDNGRSFSCSATLEVAGQLIHKNQTRELRVLYGPRLDERDCPGNWTWPENSQQTPMCQAWGNPLPELKCLKDGTFPLPVGESVTVTRDLEGTYLCRARSTQGEVTREVTVNVLSPRYEFVIIAVVAAAVIMGTAGLSTYLYNRQRKIRKYRLQQAQKGTPMKPNTQATPP</sequence>
<accession>Q5NKV9</accession>
<dbReference type="EMBL" id="AF340036">
    <property type="protein sequence ID" value="AAQ14899.1"/>
    <property type="molecule type" value="mRNA"/>
</dbReference>
<dbReference type="EMBL" id="AF340037">
    <property type="protein sequence ID" value="AAQ14900.1"/>
    <property type="molecule type" value="mRNA"/>
</dbReference>
<dbReference type="RefSeq" id="NP_001266532.1">
    <property type="nucleotide sequence ID" value="NM_001279603.1"/>
</dbReference>
<dbReference type="SMR" id="Q5NKV9"/>
<dbReference type="FunCoup" id="Q5NKV9">
    <property type="interactions" value="516"/>
</dbReference>
<dbReference type="STRING" id="9593.ENSGGOP00000038077"/>
<dbReference type="GlyCosmos" id="Q5NKV9">
    <property type="glycosylation" value="4 sites, No reported glycans"/>
</dbReference>
<dbReference type="Ensembl" id="ENSGGOT00000064956.1">
    <property type="protein sequence ID" value="ENSGGOP00000038077.1"/>
    <property type="gene ID" value="ENSGGOG00000005980.3"/>
</dbReference>
<dbReference type="GeneID" id="101127502"/>
<dbReference type="KEGG" id="ggo:101127502"/>
<dbReference type="CTD" id="3383"/>
<dbReference type="eggNOG" id="ENOG502RZRA">
    <property type="taxonomic scope" value="Eukaryota"/>
</dbReference>
<dbReference type="GeneTree" id="ENSGT00940000162311"/>
<dbReference type="HOGENOM" id="CLU_036160_1_1_1"/>
<dbReference type="InParanoid" id="Q5NKV9"/>
<dbReference type="OrthoDB" id="10881at9604"/>
<dbReference type="Proteomes" id="UP000001519">
    <property type="component" value="Chromosome 19"/>
</dbReference>
<dbReference type="Bgee" id="ENSGGOG00000005980">
    <property type="expression patterns" value="Expressed in liver and 6 other cell types or tissues"/>
</dbReference>
<dbReference type="GO" id="GO:0009897">
    <property type="term" value="C:external side of plasma membrane"/>
    <property type="evidence" value="ECO:0007669"/>
    <property type="project" value="Ensembl"/>
</dbReference>
<dbReference type="GO" id="GO:0070062">
    <property type="term" value="C:extracellular exosome"/>
    <property type="evidence" value="ECO:0007669"/>
    <property type="project" value="Ensembl"/>
</dbReference>
<dbReference type="GO" id="GO:0001772">
    <property type="term" value="C:immunological synapse"/>
    <property type="evidence" value="ECO:0007669"/>
    <property type="project" value="Ensembl"/>
</dbReference>
<dbReference type="GO" id="GO:0045121">
    <property type="term" value="C:membrane raft"/>
    <property type="evidence" value="ECO:0007669"/>
    <property type="project" value="Ensembl"/>
</dbReference>
<dbReference type="GO" id="GO:0005886">
    <property type="term" value="C:plasma membrane"/>
    <property type="evidence" value="ECO:0000318"/>
    <property type="project" value="GO_Central"/>
</dbReference>
<dbReference type="GO" id="GO:0005178">
    <property type="term" value="F:integrin binding"/>
    <property type="evidence" value="ECO:0000318"/>
    <property type="project" value="GO_Central"/>
</dbReference>
<dbReference type="GO" id="GO:0007155">
    <property type="term" value="P:cell adhesion"/>
    <property type="evidence" value="ECO:0000318"/>
    <property type="project" value="GO_Central"/>
</dbReference>
<dbReference type="GO" id="GO:0033627">
    <property type="term" value="P:cell adhesion mediated by integrin"/>
    <property type="evidence" value="ECO:0007669"/>
    <property type="project" value="Ensembl"/>
</dbReference>
<dbReference type="GO" id="GO:1904646">
    <property type="term" value="P:cellular response to amyloid-beta"/>
    <property type="evidence" value="ECO:0007669"/>
    <property type="project" value="Ensembl"/>
</dbReference>
<dbReference type="GO" id="GO:0071333">
    <property type="term" value="P:cellular response to glucose stimulus"/>
    <property type="evidence" value="ECO:0007669"/>
    <property type="project" value="Ensembl"/>
</dbReference>
<dbReference type="GO" id="GO:1990830">
    <property type="term" value="P:cellular response to leukemia inhibitory factor"/>
    <property type="evidence" value="ECO:0007669"/>
    <property type="project" value="Ensembl"/>
</dbReference>
<dbReference type="GO" id="GO:0061028">
    <property type="term" value="P:establishment of endothelial barrier"/>
    <property type="evidence" value="ECO:0007669"/>
    <property type="project" value="Ensembl"/>
</dbReference>
<dbReference type="GO" id="GO:0007159">
    <property type="term" value="P:leukocyte cell-cell adhesion"/>
    <property type="evidence" value="ECO:0007669"/>
    <property type="project" value="Ensembl"/>
</dbReference>
<dbReference type="GO" id="GO:0022614">
    <property type="term" value="P:membrane to membrane docking"/>
    <property type="evidence" value="ECO:0007669"/>
    <property type="project" value="Ensembl"/>
</dbReference>
<dbReference type="GO" id="GO:2000352">
    <property type="term" value="P:negative regulation of endothelial cell apoptotic process"/>
    <property type="evidence" value="ECO:0007669"/>
    <property type="project" value="Ensembl"/>
</dbReference>
<dbReference type="GO" id="GO:1902042">
    <property type="term" value="P:negative regulation of extrinsic apoptotic signaling pathway via death domain receptors"/>
    <property type="evidence" value="ECO:0007669"/>
    <property type="project" value="Ensembl"/>
</dbReference>
<dbReference type="GO" id="GO:0002693">
    <property type="term" value="P:positive regulation of cellular extravasation"/>
    <property type="evidence" value="ECO:0007669"/>
    <property type="project" value="Ensembl"/>
</dbReference>
<dbReference type="GO" id="GO:0070374">
    <property type="term" value="P:positive regulation of ERK1 and ERK2 cascade"/>
    <property type="evidence" value="ECO:0007669"/>
    <property type="project" value="Ensembl"/>
</dbReference>
<dbReference type="GO" id="GO:0046813">
    <property type="term" value="P:receptor-mediated virion attachment to host cell"/>
    <property type="evidence" value="ECO:0007669"/>
    <property type="project" value="Ensembl"/>
</dbReference>
<dbReference type="GO" id="GO:1900027">
    <property type="term" value="P:regulation of ruffle assembly"/>
    <property type="evidence" value="ECO:0007669"/>
    <property type="project" value="Ensembl"/>
</dbReference>
<dbReference type="GO" id="GO:0002291">
    <property type="term" value="P:T cell activation via T cell receptor contact with antigen bound to MHC molecule on antigen presenting cell"/>
    <property type="evidence" value="ECO:0007669"/>
    <property type="project" value="Ensembl"/>
</dbReference>
<dbReference type="GO" id="GO:0002457">
    <property type="term" value="P:T cell antigen processing and presentation"/>
    <property type="evidence" value="ECO:0007669"/>
    <property type="project" value="Ensembl"/>
</dbReference>
<dbReference type="GO" id="GO:0072683">
    <property type="term" value="P:T cell extravasation"/>
    <property type="evidence" value="ECO:0007669"/>
    <property type="project" value="Ensembl"/>
</dbReference>
<dbReference type="FunFam" id="2.60.40.10:FF:000194">
    <property type="entry name" value="Intercellular adhesion molecule 1"/>
    <property type="match status" value="1"/>
</dbReference>
<dbReference type="FunFam" id="2.60.40.10:FF:000459">
    <property type="entry name" value="Intercellular adhesion molecule 1"/>
    <property type="match status" value="1"/>
</dbReference>
<dbReference type="FunFam" id="2.60.40.10:FF:000641">
    <property type="entry name" value="Intercellular adhesion molecule 1"/>
    <property type="match status" value="1"/>
</dbReference>
<dbReference type="FunFam" id="2.60.40.10:FF:000648">
    <property type="entry name" value="Intercellular adhesion molecule 1"/>
    <property type="match status" value="1"/>
</dbReference>
<dbReference type="FunFam" id="2.60.40.10:FF:000338">
    <property type="entry name" value="intercellular adhesion molecule 5"/>
    <property type="match status" value="1"/>
</dbReference>
<dbReference type="Gene3D" id="2.60.40.10">
    <property type="entry name" value="Immunoglobulins"/>
    <property type="match status" value="5"/>
</dbReference>
<dbReference type="InterPro" id="IPR003988">
    <property type="entry name" value="ICAM"/>
</dbReference>
<dbReference type="InterPro" id="IPR048679">
    <property type="entry name" value="ICAM1_3_5_D2"/>
</dbReference>
<dbReference type="InterPro" id="IPR013768">
    <property type="entry name" value="ICAM_N"/>
</dbReference>
<dbReference type="InterPro" id="IPR047012">
    <property type="entry name" value="ICAM_VCAM"/>
</dbReference>
<dbReference type="InterPro" id="IPR003987">
    <property type="entry name" value="ICAM_VCAM_N"/>
</dbReference>
<dbReference type="InterPro" id="IPR036179">
    <property type="entry name" value="Ig-like_dom_sf"/>
</dbReference>
<dbReference type="InterPro" id="IPR013783">
    <property type="entry name" value="Ig-like_fold"/>
</dbReference>
<dbReference type="InterPro" id="IPR003599">
    <property type="entry name" value="Ig_sub"/>
</dbReference>
<dbReference type="PANTHER" id="PTHR13771">
    <property type="entry name" value="INTERCELLULAR ADHESION MOLECULE"/>
    <property type="match status" value="1"/>
</dbReference>
<dbReference type="PANTHER" id="PTHR13771:SF18">
    <property type="entry name" value="INTERCELLULAR ADHESION MOLECULE 1"/>
    <property type="match status" value="1"/>
</dbReference>
<dbReference type="Pfam" id="PF21146">
    <property type="entry name" value="ICAM1_3_5_D2"/>
    <property type="match status" value="1"/>
</dbReference>
<dbReference type="Pfam" id="PF03921">
    <property type="entry name" value="ICAM_N"/>
    <property type="match status" value="1"/>
</dbReference>
<dbReference type="Pfam" id="PF13895">
    <property type="entry name" value="Ig_2"/>
    <property type="match status" value="1"/>
</dbReference>
<dbReference type="PRINTS" id="PR01473">
    <property type="entry name" value="ICAM"/>
</dbReference>
<dbReference type="PRINTS" id="PR01472">
    <property type="entry name" value="ICAMVCAM1"/>
</dbReference>
<dbReference type="SMART" id="SM00409">
    <property type="entry name" value="IG"/>
    <property type="match status" value="3"/>
</dbReference>
<dbReference type="SUPFAM" id="SSF48726">
    <property type="entry name" value="Immunoglobulin"/>
    <property type="match status" value="5"/>
</dbReference>
<reference key="1">
    <citation type="submission" date="2001-01" db="EMBL/GenBank/DDBJ databases">
        <title>The chimpanzee ICAM proteins have been positively selected.</title>
        <authorList>
            <person name="Messier W."/>
            <person name="Walter N.A.R."/>
            <person name="Hink R.L."/>
        </authorList>
    </citation>
    <scope>NUCLEOTIDE SEQUENCE [MRNA]</scope>
    <source>
        <strain>Isolate Kudzu</strain>
        <strain>Isolate Rok</strain>
        <tissue>Blood</tissue>
    </source>
</reference>
<proteinExistence type="evidence at transcript level"/>
<protein>
    <recommendedName>
        <fullName>Intercellular adhesion molecule 1</fullName>
        <shortName>ICAM-1</shortName>
    </recommendedName>
    <cdAntigenName>CD54</cdAntigenName>
</protein>
<keyword id="KW-0130">Cell adhesion</keyword>
<keyword id="KW-1015">Disulfide bond</keyword>
<keyword id="KW-0325">Glycoprotein</keyword>
<keyword id="KW-0393">Immunoglobulin domain</keyword>
<keyword id="KW-0472">Membrane</keyword>
<keyword id="KW-0597">Phosphoprotein</keyword>
<keyword id="KW-1185">Reference proteome</keyword>
<keyword id="KW-0677">Repeat</keyword>
<keyword id="KW-0732">Signal</keyword>
<keyword id="KW-0812">Transmembrane</keyword>
<keyword id="KW-1133">Transmembrane helix</keyword>
<keyword id="KW-0832">Ubl conjugation</keyword>
<organism>
    <name type="scientific">Gorilla gorilla gorilla</name>
    <name type="common">Western lowland gorilla</name>
    <dbReference type="NCBI Taxonomy" id="9595"/>
    <lineage>
        <taxon>Eukaryota</taxon>
        <taxon>Metazoa</taxon>
        <taxon>Chordata</taxon>
        <taxon>Craniata</taxon>
        <taxon>Vertebrata</taxon>
        <taxon>Euteleostomi</taxon>
        <taxon>Mammalia</taxon>
        <taxon>Eutheria</taxon>
        <taxon>Euarchontoglires</taxon>
        <taxon>Primates</taxon>
        <taxon>Haplorrhini</taxon>
        <taxon>Catarrhini</taxon>
        <taxon>Hominidae</taxon>
        <taxon>Gorilla</taxon>
    </lineage>
</organism>
<gene>
    <name type="primary">ICAM1</name>
</gene>
<comment type="function">
    <text evidence="1">ICAM proteins are ligands for the leukocyte adhesion protein LFA-1 (integrin alpha-L/beta-2). During leukocyte trans-endothelial migration, ICAM1 engagement promotes the assembly of endothelial apical cups through ARHGEF26/SGEF and RHOG activation (By similarity).</text>
</comment>
<comment type="subunit">
    <text evidence="2">Homodimer. Interacts with MUC1 and promotes cell aggregation in epithelial cells. Interacts with ARHGEF26/SGEF. Interacts (on T cell side) with CD81, CD247 and CD9 at immunological synapses between antigen-presenting cells and T cells.</text>
</comment>
<comment type="subcellular location">
    <subcellularLocation>
        <location evidence="1">Membrane</location>
        <topology evidence="1">Single-pass type I membrane protein</topology>
    </subcellularLocation>
</comment>
<comment type="PTM">
    <text evidence="1">Monoubiquitinated, which is promoted by MARCH9 and leads to endocytosis.</text>
</comment>
<comment type="similarity">
    <text evidence="4">Belongs to the immunoglobulin superfamily. ICAM family.</text>
</comment>
<name>ICAM1_GORGO</name>
<feature type="signal peptide" evidence="1">
    <location>
        <begin position="1"/>
        <end position="27"/>
    </location>
</feature>
<feature type="chain" id="PRO_0000014782" description="Intercellular adhesion molecule 1">
    <location>
        <begin position="28"/>
        <end position="532"/>
    </location>
</feature>
<feature type="topological domain" description="Extracellular" evidence="3">
    <location>
        <begin position="28"/>
        <end position="480"/>
    </location>
</feature>
<feature type="transmembrane region" description="Helical" evidence="3">
    <location>
        <begin position="481"/>
        <end position="503"/>
    </location>
</feature>
<feature type="topological domain" description="Cytoplasmic" evidence="3">
    <location>
        <begin position="504"/>
        <end position="532"/>
    </location>
</feature>
<feature type="domain" description="Ig-like C2-type 1">
    <location>
        <begin position="41"/>
        <end position="103"/>
    </location>
</feature>
<feature type="domain" description="Ig-like C2-type 2">
    <location>
        <begin position="128"/>
        <end position="193"/>
    </location>
</feature>
<feature type="domain" description="Ig-like C2-type 3">
    <location>
        <begin position="230"/>
        <end position="297"/>
    </location>
</feature>
<feature type="domain" description="Ig-like C2-type 4">
    <location>
        <begin position="325"/>
        <end position="378"/>
    </location>
</feature>
<feature type="domain" description="Ig-like C2-type 5">
    <location>
        <begin position="412"/>
        <end position="464"/>
    </location>
</feature>
<feature type="short sequence motif" description="Cell attachment site; atypical" evidence="3">
    <location>
        <begin position="152"/>
        <end position="154"/>
    </location>
</feature>
<feature type="modified residue" description="Phosphothreonine" evidence="2">
    <location>
        <position position="521"/>
    </location>
</feature>
<feature type="modified residue" description="Phosphothreonine" evidence="2">
    <location>
        <position position="530"/>
    </location>
</feature>
<feature type="glycosylation site" description="N-linked (GlcNAc...) asparagine" evidence="3">
    <location>
        <position position="202"/>
    </location>
</feature>
<feature type="glycosylation site" description="N-linked (GlcNAc...) asparagine" evidence="3">
    <location>
        <position position="267"/>
    </location>
</feature>
<feature type="glycosylation site" description="N-linked (GlcNAc...) asparagine" evidence="3">
    <location>
        <position position="385"/>
    </location>
</feature>
<feature type="glycosylation site" description="N-linked (GlcNAc...) asparagine" evidence="3">
    <location>
        <position position="406"/>
    </location>
</feature>
<feature type="disulfide bond" evidence="2">
    <location>
        <begin position="48"/>
        <end position="92"/>
    </location>
</feature>
<feature type="disulfide bond" evidence="2">
    <location>
        <begin position="52"/>
        <end position="96"/>
    </location>
</feature>
<feature type="disulfide bond" evidence="2">
    <location>
        <begin position="135"/>
        <end position="186"/>
    </location>
</feature>
<feature type="disulfide bond" evidence="2">
    <location>
        <begin position="237"/>
        <end position="290"/>
    </location>
</feature>
<feature type="disulfide bond" evidence="2">
    <location>
        <begin position="332"/>
        <end position="371"/>
    </location>
</feature>
<feature type="disulfide bond" evidence="2">
    <location>
        <begin position="403"/>
        <end position="419"/>
    </location>
</feature>
<feature type="disulfide bond" evidence="1">
    <location>
        <begin position="419"/>
        <end position="457"/>
    </location>
</feature>
<feature type="disulfide bond" evidence="2">
    <location>
        <begin position="431"/>
        <end position="457"/>
    </location>
</feature>